<accession>Q9Y7N6</accession>
<organism>
    <name type="scientific">Schizosaccharomyces pombe (strain 972 / ATCC 24843)</name>
    <name type="common">Fission yeast</name>
    <dbReference type="NCBI Taxonomy" id="284812"/>
    <lineage>
        <taxon>Eukaryota</taxon>
        <taxon>Fungi</taxon>
        <taxon>Dikarya</taxon>
        <taxon>Ascomycota</taxon>
        <taxon>Taphrinomycotina</taxon>
        <taxon>Schizosaccharomycetes</taxon>
        <taxon>Schizosaccharomycetales</taxon>
        <taxon>Schizosaccharomycetaceae</taxon>
        <taxon>Schizosaccharomyces</taxon>
    </lineage>
</organism>
<gene>
    <name type="primary">plb5</name>
    <name evidence="5" type="ORF">SPCC1450.09c</name>
</gene>
<evidence type="ECO:0000250" key="1"/>
<evidence type="ECO:0000255" key="2"/>
<evidence type="ECO:0000255" key="3">
    <source>
        <dbReference type="PROSITE-ProRule" id="PRU00555"/>
    </source>
</evidence>
<evidence type="ECO:0000305" key="4"/>
<evidence type="ECO:0000312" key="5">
    <source>
        <dbReference type="PomBase" id="SPCC1450.09c"/>
    </source>
</evidence>
<feature type="signal peptide" evidence="2">
    <location>
        <begin position="1"/>
        <end position="19"/>
    </location>
</feature>
<feature type="chain" id="PRO_0000024643" description="Probable lysophospholipase 5">
    <location>
        <begin position="20"/>
        <end position="623"/>
    </location>
</feature>
<feature type="domain" description="PLA2c" evidence="3">
    <location>
        <begin position="67"/>
        <end position="607"/>
    </location>
</feature>
<feature type="glycosylation site" description="N-linked (GlcNAc...) asparagine" evidence="2">
    <location>
        <position position="118"/>
    </location>
</feature>
<feature type="glycosylation site" description="N-linked (GlcNAc...) asparagine" evidence="2">
    <location>
        <position position="153"/>
    </location>
</feature>
<feature type="glycosylation site" description="N-linked (GlcNAc...) asparagine" evidence="2">
    <location>
        <position position="187"/>
    </location>
</feature>
<feature type="glycosylation site" description="N-linked (GlcNAc...) asparagine" evidence="2">
    <location>
        <position position="232"/>
    </location>
</feature>
<feature type="glycosylation site" description="N-linked (GlcNAc...) asparagine" evidence="2">
    <location>
        <position position="256"/>
    </location>
</feature>
<feature type="glycosylation site" description="N-linked (GlcNAc...) asparagine" evidence="2">
    <location>
        <position position="264"/>
    </location>
</feature>
<feature type="glycosylation site" description="N-linked (GlcNAc...) asparagine" evidence="2">
    <location>
        <position position="293"/>
    </location>
</feature>
<feature type="glycosylation site" description="N-linked (GlcNAc...) asparagine" evidence="2">
    <location>
        <position position="331"/>
    </location>
</feature>
<feature type="glycosylation site" description="N-linked (GlcNAc...) asparagine" evidence="2">
    <location>
        <position position="360"/>
    </location>
</feature>
<feature type="glycosylation site" description="N-linked (GlcNAc...) asparagine" evidence="2">
    <location>
        <position position="367"/>
    </location>
</feature>
<feature type="glycosylation site" description="N-linked (GlcNAc...) asparagine" evidence="2">
    <location>
        <position position="400"/>
    </location>
</feature>
<feature type="glycosylation site" description="N-linked (GlcNAc...) asparagine" evidence="2">
    <location>
        <position position="403"/>
    </location>
</feature>
<feature type="glycosylation site" description="N-linked (GlcNAc...) asparagine" evidence="2">
    <location>
        <position position="474"/>
    </location>
</feature>
<feature type="glycosylation site" description="N-linked (GlcNAc...) asparagine" evidence="2">
    <location>
        <position position="508"/>
    </location>
</feature>
<feature type="glycosylation site" description="N-linked (GlcNAc...) asparagine" evidence="2">
    <location>
        <position position="513"/>
    </location>
</feature>
<feature type="glycosylation site" description="N-linked (GlcNAc...) asparagine" evidence="2">
    <location>
        <position position="537"/>
    </location>
</feature>
<feature type="glycosylation site" description="N-linked (GlcNAc...) asparagine" evidence="2">
    <location>
        <position position="564"/>
    </location>
</feature>
<feature type="glycosylation site" description="N-linked (GlcNAc...) asparagine" evidence="2">
    <location>
        <position position="586"/>
    </location>
</feature>
<feature type="glycosylation site" description="N-linked (GlcNAc...) asparagine" evidence="2">
    <location>
        <position position="603"/>
    </location>
</feature>
<name>PLB5_SCHPO</name>
<comment type="function">
    <text evidence="1">Catalyzes the release of fatty acids from lysophospholipids.</text>
</comment>
<comment type="catalytic activity">
    <reaction>
        <text>a 1-acyl-sn-glycero-3-phosphocholine + H2O = sn-glycerol 3-phosphocholine + a fatty acid + H(+)</text>
        <dbReference type="Rhea" id="RHEA:15177"/>
        <dbReference type="ChEBI" id="CHEBI:15377"/>
        <dbReference type="ChEBI" id="CHEBI:15378"/>
        <dbReference type="ChEBI" id="CHEBI:16870"/>
        <dbReference type="ChEBI" id="CHEBI:28868"/>
        <dbReference type="ChEBI" id="CHEBI:58168"/>
        <dbReference type="EC" id="3.1.1.5"/>
    </reaction>
</comment>
<comment type="subcellular location">
    <subcellularLocation>
        <location evidence="4">Secreted</location>
    </subcellularLocation>
</comment>
<comment type="similarity">
    <text evidence="4">Belongs to the lysophospholipase family.</text>
</comment>
<protein>
    <recommendedName>
        <fullName>Probable lysophospholipase 5</fullName>
        <ecNumber>3.1.1.5</ecNumber>
    </recommendedName>
    <alternativeName>
        <fullName>Phospholipase B</fullName>
    </alternativeName>
</protein>
<dbReference type="EC" id="3.1.1.5"/>
<dbReference type="EMBL" id="CU329672">
    <property type="protein sequence ID" value="CAB40176.3"/>
    <property type="molecule type" value="Genomic_DNA"/>
</dbReference>
<dbReference type="PIR" id="T40991">
    <property type="entry name" value="T40991"/>
</dbReference>
<dbReference type="RefSeq" id="NP_588308.2">
    <property type="nucleotide sequence ID" value="NM_001023298.3"/>
</dbReference>
<dbReference type="SMR" id="Q9Y7N6"/>
<dbReference type="BioGRID" id="275706">
    <property type="interactions" value="33"/>
</dbReference>
<dbReference type="FunCoup" id="Q9Y7N6">
    <property type="interactions" value="202"/>
</dbReference>
<dbReference type="STRING" id="284812.Q9Y7N6"/>
<dbReference type="PaxDb" id="4896-SPCC1450.09c.1"/>
<dbReference type="EnsemblFungi" id="SPCC1450.09c.1">
    <property type="protein sequence ID" value="SPCC1450.09c.1:pep"/>
    <property type="gene ID" value="SPCC1450.09c"/>
</dbReference>
<dbReference type="PomBase" id="SPCC1450.09c">
    <property type="gene designation" value="plb5"/>
</dbReference>
<dbReference type="VEuPathDB" id="FungiDB:SPCC1450.09c"/>
<dbReference type="eggNOG" id="KOG1325">
    <property type="taxonomic scope" value="Eukaryota"/>
</dbReference>
<dbReference type="HOGENOM" id="CLU_014602_0_0_1"/>
<dbReference type="InParanoid" id="Q9Y7N6"/>
<dbReference type="OMA" id="FWGNITA"/>
<dbReference type="PhylomeDB" id="Q9Y7N6"/>
<dbReference type="Reactome" id="R-SPO-111995">
    <property type="pathway name" value="phospho-PLA2 pathway"/>
</dbReference>
<dbReference type="Reactome" id="R-SPO-1482788">
    <property type="pathway name" value="Acyl chain remodelling of PC"/>
</dbReference>
<dbReference type="Reactome" id="R-SPO-1482798">
    <property type="pathway name" value="Acyl chain remodeling of CL"/>
</dbReference>
<dbReference type="Reactome" id="R-SPO-1482801">
    <property type="pathway name" value="Acyl chain remodelling of PS"/>
</dbReference>
<dbReference type="Reactome" id="R-SPO-1482839">
    <property type="pathway name" value="Acyl chain remodelling of PE"/>
</dbReference>
<dbReference type="Reactome" id="R-SPO-1482922">
    <property type="pathway name" value="Acyl chain remodelling of PI"/>
</dbReference>
<dbReference type="Reactome" id="R-SPO-1482925">
    <property type="pathway name" value="Acyl chain remodelling of PG"/>
</dbReference>
<dbReference type="Reactome" id="R-SPO-1483115">
    <property type="pathway name" value="Hydrolysis of LPC"/>
</dbReference>
<dbReference type="Reactome" id="R-SPO-1483152">
    <property type="pathway name" value="Hydrolysis of LPE"/>
</dbReference>
<dbReference type="Reactome" id="R-SPO-1483166">
    <property type="pathway name" value="Synthesis of PA"/>
</dbReference>
<dbReference type="Reactome" id="R-SPO-2142753">
    <property type="pathway name" value="Arachidonate metabolism"/>
</dbReference>
<dbReference type="Reactome" id="R-SPO-418592">
    <property type="pathway name" value="ADP signalling through P2Y purinoceptor 1"/>
</dbReference>
<dbReference type="Reactome" id="R-SPO-432142">
    <property type="pathway name" value="Platelet sensitization by LDL"/>
</dbReference>
<dbReference type="Reactome" id="R-SPO-6811436">
    <property type="pathway name" value="COPI-independent Golgi-to-ER retrograde traffic"/>
</dbReference>
<dbReference type="PRO" id="PR:Q9Y7N6"/>
<dbReference type="Proteomes" id="UP000002485">
    <property type="component" value="Chromosome III"/>
</dbReference>
<dbReference type="GO" id="GO:0005829">
    <property type="term" value="C:cytosol"/>
    <property type="evidence" value="ECO:0000318"/>
    <property type="project" value="GO_Central"/>
</dbReference>
<dbReference type="GO" id="GO:0009897">
    <property type="term" value="C:external side of plasma membrane"/>
    <property type="evidence" value="ECO:0000305"/>
    <property type="project" value="PomBase"/>
</dbReference>
<dbReference type="GO" id="GO:0005576">
    <property type="term" value="C:extracellular region"/>
    <property type="evidence" value="ECO:0007669"/>
    <property type="project" value="UniProtKB-SubCell"/>
</dbReference>
<dbReference type="GO" id="GO:0009277">
    <property type="term" value="C:fungal-type cell wall"/>
    <property type="evidence" value="ECO:0000250"/>
    <property type="project" value="PomBase"/>
</dbReference>
<dbReference type="GO" id="GO:0005794">
    <property type="term" value="C:Golgi apparatus"/>
    <property type="evidence" value="ECO:0007005"/>
    <property type="project" value="PomBase"/>
</dbReference>
<dbReference type="GO" id="GO:0004622">
    <property type="term" value="F:lysophospholipase activity"/>
    <property type="evidence" value="ECO:0007669"/>
    <property type="project" value="UniProtKB-EC"/>
</dbReference>
<dbReference type="GO" id="GO:0004623">
    <property type="term" value="F:phospholipase A2 activity"/>
    <property type="evidence" value="ECO:0000318"/>
    <property type="project" value="GO_Central"/>
</dbReference>
<dbReference type="GO" id="GO:0046475">
    <property type="term" value="P:glycerophospholipid catabolic process"/>
    <property type="evidence" value="ECO:0000318"/>
    <property type="project" value="GO_Central"/>
</dbReference>
<dbReference type="CDD" id="cd07203">
    <property type="entry name" value="cPLA2_Fungal_PLB"/>
    <property type="match status" value="1"/>
</dbReference>
<dbReference type="FunFam" id="3.40.1090.10:FF:000010">
    <property type="entry name" value="Lysophospholipase"/>
    <property type="match status" value="1"/>
</dbReference>
<dbReference type="Gene3D" id="3.40.1090.10">
    <property type="entry name" value="Cytosolic phospholipase A2 catalytic domain"/>
    <property type="match status" value="1"/>
</dbReference>
<dbReference type="InterPro" id="IPR016035">
    <property type="entry name" value="Acyl_Trfase/lysoPLipase"/>
</dbReference>
<dbReference type="InterPro" id="IPR002642">
    <property type="entry name" value="LysoPLipase_cat_dom"/>
</dbReference>
<dbReference type="PANTHER" id="PTHR10728">
    <property type="entry name" value="CYTOSOLIC PHOSPHOLIPASE A2"/>
    <property type="match status" value="1"/>
</dbReference>
<dbReference type="PANTHER" id="PTHR10728:SF33">
    <property type="entry name" value="LYSOPHOSPHOLIPASE 1-RELATED"/>
    <property type="match status" value="1"/>
</dbReference>
<dbReference type="Pfam" id="PF01735">
    <property type="entry name" value="PLA2_B"/>
    <property type="match status" value="1"/>
</dbReference>
<dbReference type="SMART" id="SM00022">
    <property type="entry name" value="PLAc"/>
    <property type="match status" value="1"/>
</dbReference>
<dbReference type="SUPFAM" id="SSF52151">
    <property type="entry name" value="FabD/lysophospholipase-like"/>
    <property type="match status" value="1"/>
</dbReference>
<dbReference type="PROSITE" id="PS51210">
    <property type="entry name" value="PLA2C"/>
    <property type="match status" value="1"/>
</dbReference>
<sequence length="623" mass="67043">MKLSSFGLFLALQLLPALGLPSRIDEVDVSDPELIGLLKPDNVDKPANSIPLSKRSTSPSYAPYTVACPSGSLLRPASDGLSTGEQEFVDKRVSKVNSALESFISKTGLKIDTKSVLNDTDGPRLGIAISGGGFPAMLTGAGAINAFDARNGNTTSLGGILQSSMYLTGLSGGSWLVGSVAVNNFANITFLHDDVWNLDHSLFAPYDDAFENFYIYQEWFEQVLQKKNAGFNVSITDLWGRALALKLVNPLTGGANTTFSSVTNETWFQDGEFPFPIIIADNVIEGETVIPLNDTVFEFTPIEFGTWDTGVESFIPMEYTGTHLINGIPLNESCVRNFDNAGFLMGTSSNVFSGILPATNASLTASNNTFNNAVLSFLEMLAEDQLDVGLYPNPYQGYGNASNTTTTNPLEPYPIIELIDGGSDSEGIPFWPLLHPQRDVDVIFAIDGGYQSATSGWPDGSSLVSTYERVLATNSSGVRGFPYIPDTNTFLALGLNTHPTFFGCDGRNTTAGNHTVNDDTPPLVVYFPNYPWTMYANVTTYTVQLEDTLSSGMIENAAVAATQNNSDSFAVCVACALVQRSLERKNMSTPSQCASCFNQYCWNGTIASTTVTTYAPTVLSAKI</sequence>
<reference key="1">
    <citation type="journal article" date="2002" name="Nature">
        <title>The genome sequence of Schizosaccharomyces pombe.</title>
        <authorList>
            <person name="Wood V."/>
            <person name="Gwilliam R."/>
            <person name="Rajandream M.A."/>
            <person name="Lyne M.H."/>
            <person name="Lyne R."/>
            <person name="Stewart A."/>
            <person name="Sgouros J.G."/>
            <person name="Peat N."/>
            <person name="Hayles J."/>
            <person name="Baker S.G."/>
            <person name="Basham D."/>
            <person name="Bowman S."/>
            <person name="Brooks K."/>
            <person name="Brown D."/>
            <person name="Brown S."/>
            <person name="Chillingworth T."/>
            <person name="Churcher C.M."/>
            <person name="Collins M."/>
            <person name="Connor R."/>
            <person name="Cronin A."/>
            <person name="Davis P."/>
            <person name="Feltwell T."/>
            <person name="Fraser A."/>
            <person name="Gentles S."/>
            <person name="Goble A."/>
            <person name="Hamlin N."/>
            <person name="Harris D.E."/>
            <person name="Hidalgo J."/>
            <person name="Hodgson G."/>
            <person name="Holroyd S."/>
            <person name="Hornsby T."/>
            <person name="Howarth S."/>
            <person name="Huckle E.J."/>
            <person name="Hunt S."/>
            <person name="Jagels K."/>
            <person name="James K.D."/>
            <person name="Jones L."/>
            <person name="Jones M."/>
            <person name="Leather S."/>
            <person name="McDonald S."/>
            <person name="McLean J."/>
            <person name="Mooney P."/>
            <person name="Moule S."/>
            <person name="Mungall K.L."/>
            <person name="Murphy L.D."/>
            <person name="Niblett D."/>
            <person name="Odell C."/>
            <person name="Oliver K."/>
            <person name="O'Neil S."/>
            <person name="Pearson D."/>
            <person name="Quail M.A."/>
            <person name="Rabbinowitsch E."/>
            <person name="Rutherford K.M."/>
            <person name="Rutter S."/>
            <person name="Saunders D."/>
            <person name="Seeger K."/>
            <person name="Sharp S."/>
            <person name="Skelton J."/>
            <person name="Simmonds M.N."/>
            <person name="Squares R."/>
            <person name="Squares S."/>
            <person name="Stevens K."/>
            <person name="Taylor K."/>
            <person name="Taylor R.G."/>
            <person name="Tivey A."/>
            <person name="Walsh S.V."/>
            <person name="Warren T."/>
            <person name="Whitehead S."/>
            <person name="Woodward J.R."/>
            <person name="Volckaert G."/>
            <person name="Aert R."/>
            <person name="Robben J."/>
            <person name="Grymonprez B."/>
            <person name="Weltjens I."/>
            <person name="Vanstreels E."/>
            <person name="Rieger M."/>
            <person name="Schaefer M."/>
            <person name="Mueller-Auer S."/>
            <person name="Gabel C."/>
            <person name="Fuchs M."/>
            <person name="Duesterhoeft A."/>
            <person name="Fritzc C."/>
            <person name="Holzer E."/>
            <person name="Moestl D."/>
            <person name="Hilbert H."/>
            <person name="Borzym K."/>
            <person name="Langer I."/>
            <person name="Beck A."/>
            <person name="Lehrach H."/>
            <person name="Reinhardt R."/>
            <person name="Pohl T.M."/>
            <person name="Eger P."/>
            <person name="Zimmermann W."/>
            <person name="Wedler H."/>
            <person name="Wambutt R."/>
            <person name="Purnelle B."/>
            <person name="Goffeau A."/>
            <person name="Cadieu E."/>
            <person name="Dreano S."/>
            <person name="Gloux S."/>
            <person name="Lelaure V."/>
            <person name="Mottier S."/>
            <person name="Galibert F."/>
            <person name="Aves S.J."/>
            <person name="Xiang Z."/>
            <person name="Hunt C."/>
            <person name="Moore K."/>
            <person name="Hurst S.M."/>
            <person name="Lucas M."/>
            <person name="Rochet M."/>
            <person name="Gaillardin C."/>
            <person name="Tallada V.A."/>
            <person name="Garzon A."/>
            <person name="Thode G."/>
            <person name="Daga R.R."/>
            <person name="Cruzado L."/>
            <person name="Jimenez J."/>
            <person name="Sanchez M."/>
            <person name="del Rey F."/>
            <person name="Benito J."/>
            <person name="Dominguez A."/>
            <person name="Revuelta J.L."/>
            <person name="Moreno S."/>
            <person name="Armstrong J."/>
            <person name="Forsburg S.L."/>
            <person name="Cerutti L."/>
            <person name="Lowe T."/>
            <person name="McCombie W.R."/>
            <person name="Paulsen I."/>
            <person name="Potashkin J."/>
            <person name="Shpakovski G.V."/>
            <person name="Ussery D."/>
            <person name="Barrell B.G."/>
            <person name="Nurse P."/>
        </authorList>
    </citation>
    <scope>NUCLEOTIDE SEQUENCE [LARGE SCALE GENOMIC DNA]</scope>
    <source>
        <strain>972 / ATCC 24843</strain>
    </source>
</reference>
<keyword id="KW-0325">Glycoprotein</keyword>
<keyword id="KW-0378">Hydrolase</keyword>
<keyword id="KW-0442">Lipid degradation</keyword>
<keyword id="KW-0443">Lipid metabolism</keyword>
<keyword id="KW-1185">Reference proteome</keyword>
<keyword id="KW-0964">Secreted</keyword>
<keyword id="KW-0732">Signal</keyword>
<proteinExistence type="inferred from homology"/>